<sequence>MLDSKLLRTELDETAEKLARRGFKLDVETLRNLEEQRKSLQVKTEELQAQRNSRSKSIGQAKAKGDHEEADRIMADVANLGSELDEAKAALAELQQQIEDIALSVPNIPDDSVPLGKDENENVEVLRWGTPLAYDFEVKDHVDLGEMADGLDFASAVKISGSRFIVMKGQFARLHRALSQFMLDLHTEEHGYTEMYVPYLVNPDSLFGTGQLPKFGEDLFHTSPLTEQVSDVPLKKLSLIPTAEVPVTNMVRDTITDEADMPLKMTAHTPCFRSEAGSYGRDTRGLIRMHQFDKVELVQITRPEDSMAALEELTGHAEKVLQLLELPYRKVVLCTGDMGFGSRKTYDLEVWVPAQETYREISSCSNMWDFQARRMQARFRRKGEKKPELVHTLNGSGLAVGRTMVAILENFQQADGKIAIPQVLRKYMNGVEFIG</sequence>
<proteinExistence type="inferred from homology"/>
<dbReference type="EC" id="6.1.1.11" evidence="1"/>
<dbReference type="EMBL" id="CP001139">
    <property type="protein sequence ID" value="ACH65936.1"/>
    <property type="molecule type" value="Genomic_DNA"/>
</dbReference>
<dbReference type="RefSeq" id="WP_005418528.1">
    <property type="nucleotide sequence ID" value="NC_011184.1"/>
</dbReference>
<dbReference type="SMR" id="B5FCK7"/>
<dbReference type="KEGG" id="vfm:VFMJ11_0946"/>
<dbReference type="HOGENOM" id="CLU_023797_1_1_6"/>
<dbReference type="UniPathway" id="UPA00906">
    <property type="reaction ID" value="UER00895"/>
</dbReference>
<dbReference type="Proteomes" id="UP000001857">
    <property type="component" value="Chromosome I"/>
</dbReference>
<dbReference type="GO" id="GO:0005737">
    <property type="term" value="C:cytoplasm"/>
    <property type="evidence" value="ECO:0007669"/>
    <property type="project" value="UniProtKB-SubCell"/>
</dbReference>
<dbReference type="GO" id="GO:0005524">
    <property type="term" value="F:ATP binding"/>
    <property type="evidence" value="ECO:0007669"/>
    <property type="project" value="UniProtKB-UniRule"/>
</dbReference>
<dbReference type="GO" id="GO:0004828">
    <property type="term" value="F:serine-tRNA ligase activity"/>
    <property type="evidence" value="ECO:0007669"/>
    <property type="project" value="UniProtKB-UniRule"/>
</dbReference>
<dbReference type="GO" id="GO:0016260">
    <property type="term" value="P:selenocysteine biosynthetic process"/>
    <property type="evidence" value="ECO:0007669"/>
    <property type="project" value="UniProtKB-UniRule"/>
</dbReference>
<dbReference type="GO" id="GO:0006434">
    <property type="term" value="P:seryl-tRNA aminoacylation"/>
    <property type="evidence" value="ECO:0007669"/>
    <property type="project" value="UniProtKB-UniRule"/>
</dbReference>
<dbReference type="CDD" id="cd00770">
    <property type="entry name" value="SerRS_core"/>
    <property type="match status" value="1"/>
</dbReference>
<dbReference type="FunFam" id="3.30.930.10:FF:000018">
    <property type="entry name" value="Serine--tRNA ligase"/>
    <property type="match status" value="1"/>
</dbReference>
<dbReference type="Gene3D" id="3.30.930.10">
    <property type="entry name" value="Bira Bifunctional Protein, Domain 2"/>
    <property type="match status" value="1"/>
</dbReference>
<dbReference type="Gene3D" id="1.10.287.40">
    <property type="entry name" value="Serine-tRNA synthetase, tRNA binding domain"/>
    <property type="match status" value="1"/>
</dbReference>
<dbReference type="HAMAP" id="MF_00176">
    <property type="entry name" value="Ser_tRNA_synth_type1"/>
    <property type="match status" value="1"/>
</dbReference>
<dbReference type="InterPro" id="IPR002314">
    <property type="entry name" value="aa-tRNA-synt_IIb"/>
</dbReference>
<dbReference type="InterPro" id="IPR006195">
    <property type="entry name" value="aa-tRNA-synth_II"/>
</dbReference>
<dbReference type="InterPro" id="IPR045864">
    <property type="entry name" value="aa-tRNA-synth_II/BPL/LPL"/>
</dbReference>
<dbReference type="InterPro" id="IPR002317">
    <property type="entry name" value="Ser-tRNA-ligase_type_1"/>
</dbReference>
<dbReference type="InterPro" id="IPR015866">
    <property type="entry name" value="Ser-tRNA-synth_1_N"/>
</dbReference>
<dbReference type="InterPro" id="IPR042103">
    <property type="entry name" value="SerRS_1_N_sf"/>
</dbReference>
<dbReference type="InterPro" id="IPR033729">
    <property type="entry name" value="SerRS_core"/>
</dbReference>
<dbReference type="InterPro" id="IPR010978">
    <property type="entry name" value="tRNA-bd_arm"/>
</dbReference>
<dbReference type="NCBIfam" id="TIGR00414">
    <property type="entry name" value="serS"/>
    <property type="match status" value="1"/>
</dbReference>
<dbReference type="PANTHER" id="PTHR43697:SF1">
    <property type="entry name" value="SERINE--TRNA LIGASE"/>
    <property type="match status" value="1"/>
</dbReference>
<dbReference type="PANTHER" id="PTHR43697">
    <property type="entry name" value="SERYL-TRNA SYNTHETASE"/>
    <property type="match status" value="1"/>
</dbReference>
<dbReference type="Pfam" id="PF02403">
    <property type="entry name" value="Seryl_tRNA_N"/>
    <property type="match status" value="1"/>
</dbReference>
<dbReference type="Pfam" id="PF00587">
    <property type="entry name" value="tRNA-synt_2b"/>
    <property type="match status" value="1"/>
</dbReference>
<dbReference type="PIRSF" id="PIRSF001529">
    <property type="entry name" value="Ser-tRNA-synth_IIa"/>
    <property type="match status" value="1"/>
</dbReference>
<dbReference type="PRINTS" id="PR00981">
    <property type="entry name" value="TRNASYNTHSER"/>
</dbReference>
<dbReference type="SUPFAM" id="SSF55681">
    <property type="entry name" value="Class II aaRS and biotin synthetases"/>
    <property type="match status" value="1"/>
</dbReference>
<dbReference type="SUPFAM" id="SSF46589">
    <property type="entry name" value="tRNA-binding arm"/>
    <property type="match status" value="1"/>
</dbReference>
<dbReference type="PROSITE" id="PS50862">
    <property type="entry name" value="AA_TRNA_LIGASE_II"/>
    <property type="match status" value="1"/>
</dbReference>
<name>SYS_ALIFM</name>
<protein>
    <recommendedName>
        <fullName evidence="1">Serine--tRNA ligase</fullName>
        <ecNumber evidence="1">6.1.1.11</ecNumber>
    </recommendedName>
    <alternativeName>
        <fullName evidence="1">Seryl-tRNA synthetase</fullName>
        <shortName evidence="1">SerRS</shortName>
    </alternativeName>
    <alternativeName>
        <fullName evidence="1">Seryl-tRNA(Ser/Sec) synthetase</fullName>
    </alternativeName>
</protein>
<reference key="1">
    <citation type="submission" date="2008-08" db="EMBL/GenBank/DDBJ databases">
        <title>Complete sequence of Vibrio fischeri strain MJ11.</title>
        <authorList>
            <person name="Mandel M.J."/>
            <person name="Stabb E.V."/>
            <person name="Ruby E.G."/>
            <person name="Ferriera S."/>
            <person name="Johnson J."/>
            <person name="Kravitz S."/>
            <person name="Beeson K."/>
            <person name="Sutton G."/>
            <person name="Rogers Y.-H."/>
            <person name="Friedman R."/>
            <person name="Frazier M."/>
            <person name="Venter J.C."/>
        </authorList>
    </citation>
    <scope>NUCLEOTIDE SEQUENCE [LARGE SCALE GENOMIC DNA]</scope>
    <source>
        <strain>MJ11</strain>
    </source>
</reference>
<accession>B5FCK7</accession>
<feature type="chain" id="PRO_1000098144" description="Serine--tRNA ligase">
    <location>
        <begin position="1"/>
        <end position="435"/>
    </location>
</feature>
<feature type="region of interest" description="Disordered" evidence="2">
    <location>
        <begin position="41"/>
        <end position="70"/>
    </location>
</feature>
<feature type="compositionally biased region" description="Polar residues" evidence="2">
    <location>
        <begin position="49"/>
        <end position="58"/>
    </location>
</feature>
<feature type="binding site" evidence="1">
    <location>
        <begin position="242"/>
        <end position="244"/>
    </location>
    <ligand>
        <name>L-serine</name>
        <dbReference type="ChEBI" id="CHEBI:33384"/>
    </ligand>
</feature>
<feature type="binding site" evidence="1">
    <location>
        <begin position="273"/>
        <end position="275"/>
    </location>
    <ligand>
        <name>ATP</name>
        <dbReference type="ChEBI" id="CHEBI:30616"/>
    </ligand>
</feature>
<feature type="binding site" evidence="1">
    <location>
        <position position="296"/>
    </location>
    <ligand>
        <name>L-serine</name>
        <dbReference type="ChEBI" id="CHEBI:33384"/>
    </ligand>
</feature>
<feature type="binding site" evidence="1">
    <location>
        <begin position="360"/>
        <end position="363"/>
    </location>
    <ligand>
        <name>ATP</name>
        <dbReference type="ChEBI" id="CHEBI:30616"/>
    </ligand>
</feature>
<feature type="binding site" evidence="1">
    <location>
        <position position="396"/>
    </location>
    <ligand>
        <name>L-serine</name>
        <dbReference type="ChEBI" id="CHEBI:33384"/>
    </ligand>
</feature>
<evidence type="ECO:0000255" key="1">
    <source>
        <dbReference type="HAMAP-Rule" id="MF_00176"/>
    </source>
</evidence>
<evidence type="ECO:0000256" key="2">
    <source>
        <dbReference type="SAM" id="MobiDB-lite"/>
    </source>
</evidence>
<gene>
    <name evidence="1" type="primary">serS</name>
    <name type="ordered locus">VFMJ11_0946</name>
</gene>
<organism>
    <name type="scientific">Aliivibrio fischeri (strain MJ11)</name>
    <name type="common">Vibrio fischeri</name>
    <dbReference type="NCBI Taxonomy" id="388396"/>
    <lineage>
        <taxon>Bacteria</taxon>
        <taxon>Pseudomonadati</taxon>
        <taxon>Pseudomonadota</taxon>
        <taxon>Gammaproteobacteria</taxon>
        <taxon>Vibrionales</taxon>
        <taxon>Vibrionaceae</taxon>
        <taxon>Aliivibrio</taxon>
    </lineage>
</organism>
<keyword id="KW-0030">Aminoacyl-tRNA synthetase</keyword>
<keyword id="KW-0067">ATP-binding</keyword>
<keyword id="KW-0963">Cytoplasm</keyword>
<keyword id="KW-0436">Ligase</keyword>
<keyword id="KW-0547">Nucleotide-binding</keyword>
<keyword id="KW-0648">Protein biosynthesis</keyword>
<comment type="function">
    <text evidence="1">Catalyzes the attachment of serine to tRNA(Ser). Is also able to aminoacylate tRNA(Sec) with serine, to form the misacylated tRNA L-seryl-tRNA(Sec), which will be further converted into selenocysteinyl-tRNA(Sec).</text>
</comment>
<comment type="catalytic activity">
    <reaction evidence="1">
        <text>tRNA(Ser) + L-serine + ATP = L-seryl-tRNA(Ser) + AMP + diphosphate + H(+)</text>
        <dbReference type="Rhea" id="RHEA:12292"/>
        <dbReference type="Rhea" id="RHEA-COMP:9669"/>
        <dbReference type="Rhea" id="RHEA-COMP:9703"/>
        <dbReference type="ChEBI" id="CHEBI:15378"/>
        <dbReference type="ChEBI" id="CHEBI:30616"/>
        <dbReference type="ChEBI" id="CHEBI:33019"/>
        <dbReference type="ChEBI" id="CHEBI:33384"/>
        <dbReference type="ChEBI" id="CHEBI:78442"/>
        <dbReference type="ChEBI" id="CHEBI:78533"/>
        <dbReference type="ChEBI" id="CHEBI:456215"/>
        <dbReference type="EC" id="6.1.1.11"/>
    </reaction>
</comment>
<comment type="catalytic activity">
    <reaction evidence="1">
        <text>tRNA(Sec) + L-serine + ATP = L-seryl-tRNA(Sec) + AMP + diphosphate + H(+)</text>
        <dbReference type="Rhea" id="RHEA:42580"/>
        <dbReference type="Rhea" id="RHEA-COMP:9742"/>
        <dbReference type="Rhea" id="RHEA-COMP:10128"/>
        <dbReference type="ChEBI" id="CHEBI:15378"/>
        <dbReference type="ChEBI" id="CHEBI:30616"/>
        <dbReference type="ChEBI" id="CHEBI:33019"/>
        <dbReference type="ChEBI" id="CHEBI:33384"/>
        <dbReference type="ChEBI" id="CHEBI:78442"/>
        <dbReference type="ChEBI" id="CHEBI:78533"/>
        <dbReference type="ChEBI" id="CHEBI:456215"/>
        <dbReference type="EC" id="6.1.1.11"/>
    </reaction>
</comment>
<comment type="pathway">
    <text evidence="1">Aminoacyl-tRNA biosynthesis; selenocysteinyl-tRNA(Sec) biosynthesis; L-seryl-tRNA(Sec) from L-serine and tRNA(Sec): step 1/1.</text>
</comment>
<comment type="subunit">
    <text evidence="1">Homodimer. The tRNA molecule binds across the dimer.</text>
</comment>
<comment type="subcellular location">
    <subcellularLocation>
        <location evidence="1">Cytoplasm</location>
    </subcellularLocation>
</comment>
<comment type="domain">
    <text evidence="1">Consists of two distinct domains, a catalytic core and a N-terminal extension that is involved in tRNA binding.</text>
</comment>
<comment type="similarity">
    <text evidence="1">Belongs to the class-II aminoacyl-tRNA synthetase family. Type-1 seryl-tRNA synthetase subfamily.</text>
</comment>